<comment type="subunit">
    <text>Part of the 50S ribosomal subunit.</text>
</comment>
<comment type="subcellular location">
    <subcellularLocation>
        <location>Plastid</location>
        <location>Chloroplast</location>
    </subcellularLocation>
</comment>
<comment type="developmental stage">
    <text>Present in both bundle sheath and mesophyll cells of etiolated seedlings, protein levels increase in bundle sheath cells but not in mesophyll cells upon illumination.</text>
</comment>
<comment type="RNA editing">
    <location>
        <position position="1" evidence="3 4"/>
    </location>
    <text>The initiator methionine is created by RNA editing.</text>
</comment>
<comment type="similarity">
    <text evidence="5">Belongs to the universal ribosomal protein uL2 family.</text>
</comment>
<reference key="1">
    <citation type="journal article" date="1990" name="Nucleic Acids Res.">
        <title>Nucleotide sequence and map positions of the duplicated gene for maize (Zea mays) chloroplast ribosomal protein L2.</title>
        <authorList>
            <person name="Kavousi M."/>
            <person name="Giese K."/>
            <person name="Larrinua I.M."/>
            <person name="McLaughlin W.E."/>
            <person name="Subramanian A.R."/>
        </authorList>
    </citation>
    <scope>NUCLEOTIDE SEQUENCE [LARGE SCALE GENOMIC DNA]</scope>
    <source>
        <strain>cv. B73</strain>
    </source>
</reference>
<reference key="2">
    <citation type="journal article" date="1995" name="J. Mol. Biol.">
        <title>Complete sequence of the maize chloroplast genome: gene content, hotspots of divergence and fine tuning of genetic information by transcript editing.</title>
        <authorList>
            <person name="Maier R.M."/>
            <person name="Neckermann K."/>
            <person name="Igloi G.L."/>
            <person name="Koessel H."/>
        </authorList>
    </citation>
    <scope>NUCLEOTIDE SEQUENCE [LARGE SCALE GENOMIC DNA]</scope>
    <source>
        <strain>cv. B73</strain>
    </source>
</reference>
<reference key="3">
    <citation type="journal article" date="1991" name="Nature">
        <title>Editing of a chloroplast mRNA by creation of an initiation codon.</title>
        <authorList>
            <person name="Hoch B."/>
            <person name="Maier R.M."/>
            <person name="Appel K."/>
            <person name="Igloi G.L."/>
            <person name="Koessel H."/>
        </authorList>
    </citation>
    <scope>NUCLEOTIDE SEQUENCE [MRNA] OF 1-150</scope>
    <scope>RNA EDITING OF INITIATOR CODON</scope>
</reference>
<reference key="4">
    <citation type="journal article" date="1993" name="Plant J.">
        <title>RNA editing in maize chloroplasts is a processing step independent of splicing and cleavage to monocistronic mRNAs.</title>
        <authorList>
            <person name="Freyer R."/>
            <person name="Hoch B."/>
            <person name="Neckermann K."/>
            <person name="Maier R.M."/>
            <person name="Koessel H."/>
        </authorList>
    </citation>
    <scope>RNA EDITING OF INITIATOR CODON</scope>
    <source>
        <tissue>Seedling</tissue>
    </source>
</reference>
<reference key="5">
    <citation type="journal article" date="1999" name="Proc. Natl. Acad. Sci. U.S.A.">
        <title>Subpopulations of chloroplast ribosomes change during photoregulated development of Zea mays leaves: ribosomal proteins L2, L21, and L29.</title>
        <authorList>
            <person name="Zhao Y.-Y."/>
            <person name="Xu T."/>
            <person name="Zucchi P."/>
            <person name="Bogorad L."/>
        </authorList>
    </citation>
    <scope>EXPRESSION DURING GREENING</scope>
    <source>
        <strain>cv. FR9cms X FR37</strain>
        <tissue>Bundle sheath cell</tissue>
        <tissue>Etiolated seedling</tissue>
        <tissue>Mesophyll cell</tissue>
    </source>
</reference>
<proteinExistence type="evidence at transcript level"/>
<protein>
    <recommendedName>
        <fullName evidence="1">Large ribosomal subunit protein uL2cz/uL2cy</fullName>
    </recommendedName>
    <alternativeName>
        <fullName evidence="5">50S ribosomal protein L2, chloroplastic</fullName>
    </alternativeName>
</protein>
<sequence length="273" mass="30065">MAKHLYKTPIPSTRKGTVDRQVKSNPRNKLIHGRHRCGKGRNARGIITARHRGGGHKRLYRKIDFRRNQKDISGRIITIEYDPNRNAYICLIHYGDGEKRYILHPRGAIIGDTIVSGTKVPISMGNALPLTDMPLGTAIHNIEITRGRGGQLARAAGAVAKLIAKEGKLATLRLPSGEVRLVSQNCLATVGQVGNVGVNQKSLGRAGSKCWLGKRPVVRGVVMNPVDHPHGGGEGKAPIGRKKPTTPWGYPALGRRTRKRKKYSDSFILRRRK</sequence>
<accession>P17788</accession>
<evidence type="ECO:0000255" key="1">
    <source>
        <dbReference type="HAMAP-Rule" id="MF_01320"/>
    </source>
</evidence>
<evidence type="ECO:0000256" key="2">
    <source>
        <dbReference type="SAM" id="MobiDB-lite"/>
    </source>
</evidence>
<evidence type="ECO:0000269" key="3">
    <source>
    </source>
</evidence>
<evidence type="ECO:0000269" key="4">
    <source>
    </source>
</evidence>
<evidence type="ECO:0000305" key="5"/>
<feature type="chain" id="PRO_0000129681" description="Large ribosomal subunit protein uL2cz/uL2cy">
    <location>
        <begin position="1"/>
        <end position="273"/>
    </location>
</feature>
<feature type="region of interest" description="Disordered" evidence="2">
    <location>
        <begin position="1"/>
        <end position="22"/>
    </location>
</feature>
<feature type="region of interest" description="Disordered" evidence="2">
    <location>
        <begin position="225"/>
        <end position="273"/>
    </location>
</feature>
<geneLocation type="chloroplast"/>
<keyword id="KW-0150">Chloroplast</keyword>
<keyword id="KW-0934">Plastid</keyword>
<keyword id="KW-1185">Reference proteome</keyword>
<keyword id="KW-0687">Ribonucleoprotein</keyword>
<keyword id="KW-0689">Ribosomal protein</keyword>
<keyword id="KW-0691">RNA editing</keyword>
<dbReference type="EMBL" id="X53066">
    <property type="protein sequence ID" value="CAA37241.1"/>
    <property type="molecule type" value="Genomic_DNA"/>
</dbReference>
<dbReference type="EMBL" id="X86563">
    <property type="protein sequence ID" value="CAA60329.1"/>
    <property type="molecule type" value="Genomic_DNA"/>
</dbReference>
<dbReference type="EMBL" id="X86563">
    <property type="protein sequence ID" value="CAA60371.1"/>
    <property type="molecule type" value="Genomic_DNA"/>
</dbReference>
<dbReference type="EMBL" id="X62070">
    <property type="protein sequence ID" value="CAA43983.1"/>
    <property type="molecule type" value="mRNA"/>
</dbReference>
<dbReference type="PIR" id="S10500">
    <property type="entry name" value="R5ZM2"/>
</dbReference>
<dbReference type="SMR" id="P17788"/>
<dbReference type="FunCoup" id="P17788">
    <property type="interactions" value="448"/>
</dbReference>
<dbReference type="STRING" id="4577.P17788"/>
<dbReference type="PaxDb" id="4577-GRMZM2G309193_P01"/>
<dbReference type="KEGG" id="zma:845215"/>
<dbReference type="KEGG" id="zma:845216"/>
<dbReference type="MaizeGDB" id="66413"/>
<dbReference type="eggNOG" id="KOG0438">
    <property type="taxonomic scope" value="Eukaryota"/>
</dbReference>
<dbReference type="InParanoid" id="P17788"/>
<dbReference type="OrthoDB" id="780906at2759"/>
<dbReference type="Proteomes" id="UP000007305">
    <property type="component" value="Chloroplast"/>
</dbReference>
<dbReference type="ExpressionAtlas" id="P17788">
    <property type="expression patterns" value="baseline and differential"/>
</dbReference>
<dbReference type="GO" id="GO:0009507">
    <property type="term" value="C:chloroplast"/>
    <property type="evidence" value="ECO:0007669"/>
    <property type="project" value="UniProtKB-SubCell"/>
</dbReference>
<dbReference type="GO" id="GO:0005762">
    <property type="term" value="C:mitochondrial large ribosomal subunit"/>
    <property type="evidence" value="ECO:0000318"/>
    <property type="project" value="GO_Central"/>
</dbReference>
<dbReference type="GO" id="GO:0003723">
    <property type="term" value="F:RNA binding"/>
    <property type="evidence" value="ECO:0000318"/>
    <property type="project" value="GO_Central"/>
</dbReference>
<dbReference type="GO" id="GO:0019843">
    <property type="term" value="F:rRNA binding"/>
    <property type="evidence" value="ECO:0007669"/>
    <property type="project" value="UniProtKB-UniRule"/>
</dbReference>
<dbReference type="GO" id="GO:0003735">
    <property type="term" value="F:structural constituent of ribosome"/>
    <property type="evidence" value="ECO:0000318"/>
    <property type="project" value="GO_Central"/>
</dbReference>
<dbReference type="GO" id="GO:0016740">
    <property type="term" value="F:transferase activity"/>
    <property type="evidence" value="ECO:0007669"/>
    <property type="project" value="InterPro"/>
</dbReference>
<dbReference type="GO" id="GO:0032543">
    <property type="term" value="P:mitochondrial translation"/>
    <property type="evidence" value="ECO:0000318"/>
    <property type="project" value="GO_Central"/>
</dbReference>
<dbReference type="FunFam" id="4.10.950.10:FF:000001">
    <property type="entry name" value="50S ribosomal protein L2"/>
    <property type="match status" value="1"/>
</dbReference>
<dbReference type="FunFam" id="2.30.30.30:FF:000008">
    <property type="entry name" value="50S ribosomal protein L2, chloroplastic"/>
    <property type="match status" value="1"/>
</dbReference>
<dbReference type="FunFam" id="2.40.50.140:FF:000029">
    <property type="entry name" value="50S ribosomal protein L2, chloroplastic"/>
    <property type="match status" value="1"/>
</dbReference>
<dbReference type="Gene3D" id="2.30.30.30">
    <property type="match status" value="1"/>
</dbReference>
<dbReference type="Gene3D" id="2.40.50.140">
    <property type="entry name" value="Nucleic acid-binding proteins"/>
    <property type="match status" value="1"/>
</dbReference>
<dbReference type="Gene3D" id="4.10.950.10">
    <property type="entry name" value="Ribosomal protein L2, domain 3"/>
    <property type="match status" value="1"/>
</dbReference>
<dbReference type="HAMAP" id="MF_01320_B">
    <property type="entry name" value="Ribosomal_uL2_B"/>
    <property type="match status" value="1"/>
</dbReference>
<dbReference type="InterPro" id="IPR012340">
    <property type="entry name" value="NA-bd_OB-fold"/>
</dbReference>
<dbReference type="InterPro" id="IPR014722">
    <property type="entry name" value="Rib_uL2_dom2"/>
</dbReference>
<dbReference type="InterPro" id="IPR002171">
    <property type="entry name" value="Ribosomal_uL2"/>
</dbReference>
<dbReference type="InterPro" id="IPR005880">
    <property type="entry name" value="Ribosomal_uL2_bac/org-type"/>
</dbReference>
<dbReference type="InterPro" id="IPR022669">
    <property type="entry name" value="Ribosomal_uL2_C"/>
</dbReference>
<dbReference type="InterPro" id="IPR022671">
    <property type="entry name" value="Ribosomal_uL2_CS"/>
</dbReference>
<dbReference type="InterPro" id="IPR014726">
    <property type="entry name" value="Ribosomal_uL2_dom3"/>
</dbReference>
<dbReference type="InterPro" id="IPR022666">
    <property type="entry name" value="Ribosomal_uL2_RNA-bd_dom"/>
</dbReference>
<dbReference type="InterPro" id="IPR008991">
    <property type="entry name" value="Translation_prot_SH3-like_sf"/>
</dbReference>
<dbReference type="NCBIfam" id="TIGR01171">
    <property type="entry name" value="rplB_bact"/>
    <property type="match status" value="1"/>
</dbReference>
<dbReference type="PANTHER" id="PTHR13691:SF57">
    <property type="entry name" value="LARGE RIBOSOMAL SUBUNIT PROTEIN UL2CZ_UL2CY"/>
    <property type="match status" value="1"/>
</dbReference>
<dbReference type="PANTHER" id="PTHR13691">
    <property type="entry name" value="RIBOSOMAL PROTEIN L2"/>
    <property type="match status" value="1"/>
</dbReference>
<dbReference type="Pfam" id="PF00181">
    <property type="entry name" value="Ribosomal_L2"/>
    <property type="match status" value="1"/>
</dbReference>
<dbReference type="Pfam" id="PF03947">
    <property type="entry name" value="Ribosomal_L2_C"/>
    <property type="match status" value="1"/>
</dbReference>
<dbReference type="PIRSF" id="PIRSF002158">
    <property type="entry name" value="Ribosomal_L2"/>
    <property type="match status" value="1"/>
</dbReference>
<dbReference type="SMART" id="SM01383">
    <property type="entry name" value="Ribosomal_L2"/>
    <property type="match status" value="1"/>
</dbReference>
<dbReference type="SMART" id="SM01382">
    <property type="entry name" value="Ribosomal_L2_C"/>
    <property type="match status" value="1"/>
</dbReference>
<dbReference type="SUPFAM" id="SSF50249">
    <property type="entry name" value="Nucleic acid-binding proteins"/>
    <property type="match status" value="1"/>
</dbReference>
<dbReference type="SUPFAM" id="SSF50104">
    <property type="entry name" value="Translation proteins SH3-like domain"/>
    <property type="match status" value="1"/>
</dbReference>
<dbReference type="PROSITE" id="PS00467">
    <property type="entry name" value="RIBOSOMAL_L2"/>
    <property type="match status" value="1"/>
</dbReference>
<gene>
    <name type="primary">rpl2-A</name>
</gene>
<gene>
    <name type="primary">rpl2-B</name>
</gene>
<name>RK2_MAIZE</name>
<organism>
    <name type="scientific">Zea mays</name>
    <name type="common">Maize</name>
    <dbReference type="NCBI Taxonomy" id="4577"/>
    <lineage>
        <taxon>Eukaryota</taxon>
        <taxon>Viridiplantae</taxon>
        <taxon>Streptophyta</taxon>
        <taxon>Embryophyta</taxon>
        <taxon>Tracheophyta</taxon>
        <taxon>Spermatophyta</taxon>
        <taxon>Magnoliopsida</taxon>
        <taxon>Liliopsida</taxon>
        <taxon>Poales</taxon>
        <taxon>Poaceae</taxon>
        <taxon>PACMAD clade</taxon>
        <taxon>Panicoideae</taxon>
        <taxon>Andropogonodae</taxon>
        <taxon>Andropogoneae</taxon>
        <taxon>Tripsacinae</taxon>
        <taxon>Zea</taxon>
    </lineage>
</organism>